<name>EPN3_MOUSE</name>
<feature type="chain" id="PRO_0000074520" description="Epsin-3">
    <location>
        <begin position="1"/>
        <end position="636"/>
    </location>
</feature>
<feature type="domain" description="ENTH" evidence="3">
    <location>
        <begin position="12"/>
        <end position="144"/>
    </location>
</feature>
<feature type="domain" description="UIM 1" evidence="2">
    <location>
        <begin position="202"/>
        <end position="221"/>
    </location>
</feature>
<feature type="domain" description="UIM 2" evidence="2">
    <location>
        <begin position="229"/>
        <end position="248"/>
    </location>
</feature>
<feature type="repeat" description="1">
    <location>
        <begin position="315"/>
        <end position="317"/>
    </location>
</feature>
<feature type="repeat" description="2">
    <location>
        <begin position="338"/>
        <end position="340"/>
    </location>
</feature>
<feature type="repeat" description="3">
    <location>
        <begin position="365"/>
        <end position="367"/>
    </location>
</feature>
<feature type="repeat" description="4">
    <location>
        <begin position="381"/>
        <end position="383"/>
    </location>
</feature>
<feature type="repeat" description="5">
    <location>
        <begin position="398"/>
        <end position="400"/>
    </location>
</feature>
<feature type="repeat" description="1">
    <location>
        <begin position="523"/>
        <end position="525"/>
    </location>
</feature>
<feature type="repeat" description="2">
    <location>
        <begin position="536"/>
        <end position="538"/>
    </location>
</feature>
<feature type="repeat" description="3">
    <location>
        <begin position="633"/>
        <end position="635"/>
    </location>
</feature>
<feature type="region of interest" description="Disordered" evidence="4">
    <location>
        <begin position="153"/>
        <end position="503"/>
    </location>
</feature>
<feature type="region of interest" description="5 X 3 AA repeats of [DE]-P-W">
    <location>
        <begin position="315"/>
        <end position="400"/>
    </location>
</feature>
<feature type="region of interest" description="3 X 3 AA repeats of N-P-F">
    <location>
        <begin position="523"/>
        <end position="635"/>
    </location>
</feature>
<feature type="region of interest" description="Disordered" evidence="4">
    <location>
        <begin position="607"/>
        <end position="636"/>
    </location>
</feature>
<feature type="compositionally biased region" description="Low complexity" evidence="4">
    <location>
        <begin position="174"/>
        <end position="189"/>
    </location>
</feature>
<feature type="compositionally biased region" description="Basic and acidic residues" evidence="4">
    <location>
        <begin position="214"/>
        <end position="231"/>
    </location>
</feature>
<feature type="compositionally biased region" description="Basic and acidic residues" evidence="4">
    <location>
        <begin position="242"/>
        <end position="256"/>
    </location>
</feature>
<feature type="compositionally biased region" description="Basic and acidic residues" evidence="4">
    <location>
        <begin position="270"/>
        <end position="288"/>
    </location>
</feature>
<feature type="compositionally biased region" description="Basic and acidic residues" evidence="4">
    <location>
        <begin position="426"/>
        <end position="435"/>
    </location>
</feature>
<feature type="compositionally biased region" description="Pro residues" evidence="4">
    <location>
        <begin position="607"/>
        <end position="616"/>
    </location>
</feature>
<feature type="binding site" evidence="1">
    <location>
        <position position="8"/>
    </location>
    <ligand>
        <name>a 1,2-diacyl-sn-glycero-3-phospho-(1D-myo-inositol-4,5-bisphosphate)</name>
        <dbReference type="ChEBI" id="CHEBI:58456"/>
    </ligand>
</feature>
<feature type="binding site" evidence="1">
    <location>
        <position position="11"/>
    </location>
    <ligand>
        <name>a 1,2-diacyl-sn-glycero-3-phospho-(1D-myo-inositol-4,5-bisphosphate)</name>
        <dbReference type="ChEBI" id="CHEBI:58456"/>
    </ligand>
</feature>
<feature type="binding site" evidence="1">
    <location>
        <position position="25"/>
    </location>
    <ligand>
        <name>a 1,2-diacyl-sn-glycero-3-phospho-(1D-myo-inositol-4,5-bisphosphate)</name>
        <dbReference type="ChEBI" id="CHEBI:58456"/>
    </ligand>
</feature>
<feature type="binding site" evidence="1">
    <location>
        <position position="30"/>
    </location>
    <ligand>
        <name>a 1,2-diacyl-sn-glycero-3-phospho-(1D-myo-inositol-4,5-bisphosphate)</name>
        <dbReference type="ChEBI" id="CHEBI:58456"/>
    </ligand>
</feature>
<feature type="binding site" evidence="1">
    <location>
        <position position="63"/>
    </location>
    <ligand>
        <name>a 1,2-diacyl-sn-glycero-3-phospho-(1D-myo-inositol-4,5-bisphosphate)</name>
        <dbReference type="ChEBI" id="CHEBI:58456"/>
    </ligand>
</feature>
<feature type="binding site" evidence="1">
    <location>
        <position position="73"/>
    </location>
    <ligand>
        <name>a 1,2-diacyl-sn-glycero-3-phospho-(1D-myo-inositol-4,5-bisphosphate)</name>
        <dbReference type="ChEBI" id="CHEBI:58456"/>
    </ligand>
</feature>
<feature type="modified residue" description="Phosphoserine" evidence="6">
    <location>
        <position position="184"/>
    </location>
</feature>
<feature type="modified residue" description="Phosphoserine" evidence="6">
    <location>
        <position position="185"/>
    </location>
</feature>
<feature type="modified residue" description="Phosphoserine" evidence="6">
    <location>
        <position position="257"/>
    </location>
</feature>
<feature type="sequence conflict" description="In Ref. 2; BAB26309." evidence="5" ref="2">
    <original>D</original>
    <variation>G</variation>
    <location>
        <position position="82"/>
    </location>
</feature>
<feature type="sequence conflict" description="In Ref. 2; BAB26309." evidence="5" ref="2">
    <original>P</original>
    <variation>S</variation>
    <location>
        <position position="608"/>
    </location>
</feature>
<organism>
    <name type="scientific">Mus musculus</name>
    <name type="common">Mouse</name>
    <dbReference type="NCBI Taxonomy" id="10090"/>
    <lineage>
        <taxon>Eukaryota</taxon>
        <taxon>Metazoa</taxon>
        <taxon>Chordata</taxon>
        <taxon>Craniata</taxon>
        <taxon>Vertebrata</taxon>
        <taxon>Euteleostomi</taxon>
        <taxon>Mammalia</taxon>
        <taxon>Eutheria</taxon>
        <taxon>Euarchontoglires</taxon>
        <taxon>Glires</taxon>
        <taxon>Rodentia</taxon>
        <taxon>Myomorpha</taxon>
        <taxon>Muroidea</taxon>
        <taxon>Muridae</taxon>
        <taxon>Murinae</taxon>
        <taxon>Mus</taxon>
        <taxon>Mus</taxon>
    </lineage>
</organism>
<accession>Q91W69</accession>
<accession>Q9CV55</accession>
<dbReference type="EMBL" id="BC016454">
    <property type="protein sequence ID" value="AAH16454.1"/>
    <property type="molecule type" value="mRNA"/>
</dbReference>
<dbReference type="EMBL" id="AK009469">
    <property type="protein sequence ID" value="BAB26309.1"/>
    <property type="molecule type" value="mRNA"/>
</dbReference>
<dbReference type="CCDS" id="CCDS25257.1"/>
<dbReference type="RefSeq" id="NP_082260.1">
    <property type="nucleotide sequence ID" value="NM_027984.3"/>
</dbReference>
<dbReference type="RefSeq" id="XP_006534329.1">
    <property type="nucleotide sequence ID" value="XM_006534266.4"/>
</dbReference>
<dbReference type="SMR" id="Q91W69"/>
<dbReference type="BioGRID" id="215009">
    <property type="interactions" value="1"/>
</dbReference>
<dbReference type="DIP" id="DIP-59492N"/>
<dbReference type="FunCoup" id="Q91W69">
    <property type="interactions" value="902"/>
</dbReference>
<dbReference type="IntAct" id="Q91W69">
    <property type="interactions" value="3"/>
</dbReference>
<dbReference type="STRING" id="10090.ENSMUSP00000121390"/>
<dbReference type="iPTMnet" id="Q91W69"/>
<dbReference type="PhosphoSitePlus" id="Q91W69"/>
<dbReference type="jPOST" id="Q91W69"/>
<dbReference type="PaxDb" id="10090-ENSMUSP00000121390"/>
<dbReference type="ProteomicsDB" id="275636"/>
<dbReference type="Pumba" id="Q91W69"/>
<dbReference type="Antibodypedia" id="30580">
    <property type="antibodies" value="132 antibodies from 27 providers"/>
</dbReference>
<dbReference type="DNASU" id="71889"/>
<dbReference type="Ensembl" id="ENSMUST00000127305.2">
    <property type="protein sequence ID" value="ENSMUSP00000121390.2"/>
    <property type="gene ID" value="ENSMUSG00000010080.16"/>
</dbReference>
<dbReference type="GeneID" id="71889"/>
<dbReference type="KEGG" id="mmu:71889"/>
<dbReference type="UCSC" id="uc007kyu.2">
    <property type="organism name" value="mouse"/>
</dbReference>
<dbReference type="AGR" id="MGI:1919139"/>
<dbReference type="CTD" id="55040"/>
<dbReference type="MGI" id="MGI:1919139">
    <property type="gene designation" value="Epn3"/>
</dbReference>
<dbReference type="VEuPathDB" id="HostDB:ENSMUSG00000010080"/>
<dbReference type="eggNOG" id="KOG2056">
    <property type="taxonomic scope" value="Eukaryota"/>
</dbReference>
<dbReference type="GeneTree" id="ENSGT00940000158217"/>
<dbReference type="HOGENOM" id="CLU_012678_4_2_1"/>
<dbReference type="InParanoid" id="Q91W69"/>
<dbReference type="OMA" id="SGTHESA"/>
<dbReference type="OrthoDB" id="4033880at2759"/>
<dbReference type="PhylomeDB" id="Q91W69"/>
<dbReference type="TreeFam" id="TF313361"/>
<dbReference type="BioGRID-ORCS" id="71889">
    <property type="hits" value="4 hits in 84 CRISPR screens"/>
</dbReference>
<dbReference type="ChiTaRS" id="Epn3">
    <property type="organism name" value="mouse"/>
</dbReference>
<dbReference type="PRO" id="PR:Q91W69"/>
<dbReference type="Proteomes" id="UP000000589">
    <property type="component" value="Chromosome 11"/>
</dbReference>
<dbReference type="RNAct" id="Q91W69">
    <property type="molecule type" value="protein"/>
</dbReference>
<dbReference type="Bgee" id="ENSMUSG00000010080">
    <property type="expression patterns" value="Expressed in lip and 63 other cell types or tissues"/>
</dbReference>
<dbReference type="GO" id="GO:0005938">
    <property type="term" value="C:cell cortex"/>
    <property type="evidence" value="ECO:0007669"/>
    <property type="project" value="UniProtKB-SubCell"/>
</dbReference>
<dbReference type="GO" id="GO:0005905">
    <property type="term" value="C:clathrin-coated pit"/>
    <property type="evidence" value="ECO:0000314"/>
    <property type="project" value="MGI"/>
</dbReference>
<dbReference type="GO" id="GO:0030136">
    <property type="term" value="C:clathrin-coated vesicle"/>
    <property type="evidence" value="ECO:0007669"/>
    <property type="project" value="UniProtKB-SubCell"/>
</dbReference>
<dbReference type="GO" id="GO:0009898">
    <property type="term" value="C:cytoplasmic side of plasma membrane"/>
    <property type="evidence" value="ECO:0007669"/>
    <property type="project" value="Ensembl"/>
</dbReference>
<dbReference type="GO" id="GO:0005654">
    <property type="term" value="C:nucleoplasm"/>
    <property type="evidence" value="ECO:0007669"/>
    <property type="project" value="Ensembl"/>
</dbReference>
<dbReference type="GO" id="GO:0048471">
    <property type="term" value="C:perinuclear region of cytoplasm"/>
    <property type="evidence" value="ECO:0007669"/>
    <property type="project" value="UniProtKB-SubCell"/>
</dbReference>
<dbReference type="GO" id="GO:1990175">
    <property type="term" value="F:EH domain binding"/>
    <property type="evidence" value="ECO:0000314"/>
    <property type="project" value="MGI"/>
</dbReference>
<dbReference type="GO" id="GO:0008289">
    <property type="term" value="F:lipid binding"/>
    <property type="evidence" value="ECO:0007669"/>
    <property type="project" value="UniProtKB-KW"/>
</dbReference>
<dbReference type="CDD" id="cd16990">
    <property type="entry name" value="ENTH_Epsin"/>
    <property type="match status" value="1"/>
</dbReference>
<dbReference type="FunFam" id="1.25.40.90:FF:000002">
    <property type="entry name" value="epsin-2 isoform X1"/>
    <property type="match status" value="1"/>
</dbReference>
<dbReference type="Gene3D" id="1.25.40.90">
    <property type="match status" value="1"/>
</dbReference>
<dbReference type="InterPro" id="IPR013809">
    <property type="entry name" value="ENTH"/>
</dbReference>
<dbReference type="InterPro" id="IPR008942">
    <property type="entry name" value="ENTH_VHS"/>
</dbReference>
<dbReference type="InterPro" id="IPR003903">
    <property type="entry name" value="UIM_dom"/>
</dbReference>
<dbReference type="PANTHER" id="PTHR12276:SF16">
    <property type="entry name" value="EPSIN-3"/>
    <property type="match status" value="1"/>
</dbReference>
<dbReference type="PANTHER" id="PTHR12276">
    <property type="entry name" value="EPSIN/ENT-RELATED"/>
    <property type="match status" value="1"/>
</dbReference>
<dbReference type="Pfam" id="PF01417">
    <property type="entry name" value="ENTH"/>
    <property type="match status" value="1"/>
</dbReference>
<dbReference type="Pfam" id="PF02809">
    <property type="entry name" value="UIM"/>
    <property type="match status" value="2"/>
</dbReference>
<dbReference type="SMART" id="SM00273">
    <property type="entry name" value="ENTH"/>
    <property type="match status" value="1"/>
</dbReference>
<dbReference type="SMART" id="SM00726">
    <property type="entry name" value="UIM"/>
    <property type="match status" value="2"/>
</dbReference>
<dbReference type="SUPFAM" id="SSF48464">
    <property type="entry name" value="ENTH/VHS domain"/>
    <property type="match status" value="1"/>
</dbReference>
<dbReference type="PROSITE" id="PS50942">
    <property type="entry name" value="ENTH"/>
    <property type="match status" value="1"/>
</dbReference>
<dbReference type="PROSITE" id="PS50330">
    <property type="entry name" value="UIM"/>
    <property type="match status" value="2"/>
</dbReference>
<gene>
    <name type="primary">Epn3</name>
</gene>
<protein>
    <recommendedName>
        <fullName>Epsin-3</fullName>
    </recommendedName>
    <alternativeName>
        <fullName>EPS-15-interacting protein 3</fullName>
    </alternativeName>
</protein>
<evidence type="ECO:0000250" key="1"/>
<evidence type="ECO:0000255" key="2">
    <source>
        <dbReference type="PROSITE-ProRule" id="PRU00213"/>
    </source>
</evidence>
<evidence type="ECO:0000255" key="3">
    <source>
        <dbReference type="PROSITE-ProRule" id="PRU00243"/>
    </source>
</evidence>
<evidence type="ECO:0000256" key="4">
    <source>
        <dbReference type="SAM" id="MobiDB-lite"/>
    </source>
</evidence>
<evidence type="ECO:0000305" key="5"/>
<evidence type="ECO:0007744" key="6">
    <source>
    </source>
</evidence>
<sequence length="636" mass="68240">MTTSALRRQVKNIVHNYSEAEIKVREATSNDPWGPPSSLMSEIADLTFNTVAFAEVMGMVWRRLNDSGKNWRHVYKALTLLDYLLKTGSERVAHQCRENLYTIQTLKDFQYIDRDGKDQGVNVREKVKQVMALLKDEERLRQERTHALKTKERMALEGMGIGSGQLGYSRRSRGSPSSYTSASSSPRYASDLEQARPQTSGEEELQLQLALAMSREEAERPVPPASHRDEDLQLQLALSLSRQEHEKGVRSWKGDDSPVANGAEPAGQRRQRDREPEREERKEEEKLKTSQSSILDLADIFAPAPALPSTHCSADPWDIPGLRPNTEPSGSSWGPSADPWSPVPSGNALSRSQPWDLLPTLSSSEPWGRTPVLPSGPPIADPWAPSSPTRKLPSTGADPWGASMETSDTSALGGASPFDPFAKPLESTEPKESRDSAQALPTGKSPSTVELDPFGDSSPSCKQNGMKEPEALDLGVLGEALPQQPGKEARPCRTPESFLGPSASSLVNLDSLVKAPLAARTRNPFLTGLGVPSPTNPFGAGDQGRPTLNQMRTGSPALGLPPGGPVGAPVGSMTYSASLPLPLSSVPVGATLPASVSVFPQAGAFAPPPASLPQPLLPTSGPMGPLPPQAGTNPFL</sequence>
<comment type="subcellular location">
    <subcellularLocation>
        <location evidence="1">Cytoplasm</location>
        <location evidence="1">Cell cortex</location>
    </subcellularLocation>
    <subcellularLocation>
        <location evidence="1">Cytoplasm</location>
        <location evidence="1">Perinuclear region</location>
    </subcellularLocation>
    <subcellularLocation>
        <location evidence="1">Cytoplasmic vesicle</location>
        <location evidence="1">Clathrin-coated vesicle</location>
    </subcellularLocation>
    <text evidence="1">Concentrated in the perinuclear region and associated with clathrin-coated vesicles close to the cell periphery. May shuttle to the nucleus (By similarity).</text>
</comment>
<comment type="induction">
    <text>In keratinocytes, by wounding or contact with collagen.</text>
</comment>
<comment type="similarity">
    <text evidence="5">Belongs to the epsin family.</text>
</comment>
<proteinExistence type="evidence at protein level"/>
<keyword id="KW-0963">Cytoplasm</keyword>
<keyword id="KW-0968">Cytoplasmic vesicle</keyword>
<keyword id="KW-0446">Lipid-binding</keyword>
<keyword id="KW-0597">Phosphoprotein</keyword>
<keyword id="KW-1185">Reference proteome</keyword>
<keyword id="KW-0677">Repeat</keyword>
<reference key="1">
    <citation type="journal article" date="2004" name="Genome Res.">
        <title>The status, quality, and expansion of the NIH full-length cDNA project: the Mammalian Gene Collection (MGC).</title>
        <authorList>
            <consortium name="The MGC Project Team"/>
        </authorList>
    </citation>
    <scope>NUCLEOTIDE SEQUENCE [LARGE SCALE MRNA]</scope>
    <source>
        <tissue>Colon</tissue>
    </source>
</reference>
<reference key="2">
    <citation type="journal article" date="2005" name="Science">
        <title>The transcriptional landscape of the mammalian genome.</title>
        <authorList>
            <person name="Carninci P."/>
            <person name="Kasukawa T."/>
            <person name="Katayama S."/>
            <person name="Gough J."/>
            <person name="Frith M.C."/>
            <person name="Maeda N."/>
            <person name="Oyama R."/>
            <person name="Ravasi T."/>
            <person name="Lenhard B."/>
            <person name="Wells C."/>
            <person name="Kodzius R."/>
            <person name="Shimokawa K."/>
            <person name="Bajic V.B."/>
            <person name="Brenner S.E."/>
            <person name="Batalov S."/>
            <person name="Forrest A.R."/>
            <person name="Zavolan M."/>
            <person name="Davis M.J."/>
            <person name="Wilming L.G."/>
            <person name="Aidinis V."/>
            <person name="Allen J.E."/>
            <person name="Ambesi-Impiombato A."/>
            <person name="Apweiler R."/>
            <person name="Aturaliya R.N."/>
            <person name="Bailey T.L."/>
            <person name="Bansal M."/>
            <person name="Baxter L."/>
            <person name="Beisel K.W."/>
            <person name="Bersano T."/>
            <person name="Bono H."/>
            <person name="Chalk A.M."/>
            <person name="Chiu K.P."/>
            <person name="Choudhary V."/>
            <person name="Christoffels A."/>
            <person name="Clutterbuck D.R."/>
            <person name="Crowe M.L."/>
            <person name="Dalla E."/>
            <person name="Dalrymple B.P."/>
            <person name="de Bono B."/>
            <person name="Della Gatta G."/>
            <person name="di Bernardo D."/>
            <person name="Down T."/>
            <person name="Engstrom P."/>
            <person name="Fagiolini M."/>
            <person name="Faulkner G."/>
            <person name="Fletcher C.F."/>
            <person name="Fukushima T."/>
            <person name="Furuno M."/>
            <person name="Futaki S."/>
            <person name="Gariboldi M."/>
            <person name="Georgii-Hemming P."/>
            <person name="Gingeras T.R."/>
            <person name="Gojobori T."/>
            <person name="Green R.E."/>
            <person name="Gustincich S."/>
            <person name="Harbers M."/>
            <person name="Hayashi Y."/>
            <person name="Hensch T.K."/>
            <person name="Hirokawa N."/>
            <person name="Hill D."/>
            <person name="Huminiecki L."/>
            <person name="Iacono M."/>
            <person name="Ikeo K."/>
            <person name="Iwama A."/>
            <person name="Ishikawa T."/>
            <person name="Jakt M."/>
            <person name="Kanapin A."/>
            <person name="Katoh M."/>
            <person name="Kawasawa Y."/>
            <person name="Kelso J."/>
            <person name="Kitamura H."/>
            <person name="Kitano H."/>
            <person name="Kollias G."/>
            <person name="Krishnan S.P."/>
            <person name="Kruger A."/>
            <person name="Kummerfeld S.K."/>
            <person name="Kurochkin I.V."/>
            <person name="Lareau L.F."/>
            <person name="Lazarevic D."/>
            <person name="Lipovich L."/>
            <person name="Liu J."/>
            <person name="Liuni S."/>
            <person name="McWilliam S."/>
            <person name="Madan Babu M."/>
            <person name="Madera M."/>
            <person name="Marchionni L."/>
            <person name="Matsuda H."/>
            <person name="Matsuzawa S."/>
            <person name="Miki H."/>
            <person name="Mignone F."/>
            <person name="Miyake S."/>
            <person name="Morris K."/>
            <person name="Mottagui-Tabar S."/>
            <person name="Mulder N."/>
            <person name="Nakano N."/>
            <person name="Nakauchi H."/>
            <person name="Ng P."/>
            <person name="Nilsson R."/>
            <person name="Nishiguchi S."/>
            <person name="Nishikawa S."/>
            <person name="Nori F."/>
            <person name="Ohara O."/>
            <person name="Okazaki Y."/>
            <person name="Orlando V."/>
            <person name="Pang K.C."/>
            <person name="Pavan W.J."/>
            <person name="Pavesi G."/>
            <person name="Pesole G."/>
            <person name="Petrovsky N."/>
            <person name="Piazza S."/>
            <person name="Reed J."/>
            <person name="Reid J.F."/>
            <person name="Ring B.Z."/>
            <person name="Ringwald M."/>
            <person name="Rost B."/>
            <person name="Ruan Y."/>
            <person name="Salzberg S.L."/>
            <person name="Sandelin A."/>
            <person name="Schneider C."/>
            <person name="Schoenbach C."/>
            <person name="Sekiguchi K."/>
            <person name="Semple C.A."/>
            <person name="Seno S."/>
            <person name="Sessa L."/>
            <person name="Sheng Y."/>
            <person name="Shibata Y."/>
            <person name="Shimada H."/>
            <person name="Shimada K."/>
            <person name="Silva D."/>
            <person name="Sinclair B."/>
            <person name="Sperling S."/>
            <person name="Stupka E."/>
            <person name="Sugiura K."/>
            <person name="Sultana R."/>
            <person name="Takenaka Y."/>
            <person name="Taki K."/>
            <person name="Tammoja K."/>
            <person name="Tan S.L."/>
            <person name="Tang S."/>
            <person name="Taylor M.S."/>
            <person name="Tegner J."/>
            <person name="Teichmann S.A."/>
            <person name="Ueda H.R."/>
            <person name="van Nimwegen E."/>
            <person name="Verardo R."/>
            <person name="Wei C.L."/>
            <person name="Yagi K."/>
            <person name="Yamanishi H."/>
            <person name="Zabarovsky E."/>
            <person name="Zhu S."/>
            <person name="Zimmer A."/>
            <person name="Hide W."/>
            <person name="Bult C."/>
            <person name="Grimmond S.M."/>
            <person name="Teasdale R.D."/>
            <person name="Liu E.T."/>
            <person name="Brusic V."/>
            <person name="Quackenbush J."/>
            <person name="Wahlestedt C."/>
            <person name="Mattick J.S."/>
            <person name="Hume D.A."/>
            <person name="Kai C."/>
            <person name="Sasaki D."/>
            <person name="Tomaru Y."/>
            <person name="Fukuda S."/>
            <person name="Kanamori-Katayama M."/>
            <person name="Suzuki M."/>
            <person name="Aoki J."/>
            <person name="Arakawa T."/>
            <person name="Iida J."/>
            <person name="Imamura K."/>
            <person name="Itoh M."/>
            <person name="Kato T."/>
            <person name="Kawaji H."/>
            <person name="Kawagashira N."/>
            <person name="Kawashima T."/>
            <person name="Kojima M."/>
            <person name="Kondo S."/>
            <person name="Konno H."/>
            <person name="Nakano K."/>
            <person name="Ninomiya N."/>
            <person name="Nishio T."/>
            <person name="Okada M."/>
            <person name="Plessy C."/>
            <person name="Shibata K."/>
            <person name="Shiraki T."/>
            <person name="Suzuki S."/>
            <person name="Tagami M."/>
            <person name="Waki K."/>
            <person name="Watahiki A."/>
            <person name="Okamura-Oho Y."/>
            <person name="Suzuki H."/>
            <person name="Kawai J."/>
            <person name="Hayashizaki Y."/>
        </authorList>
    </citation>
    <scope>NUCLEOTIDE SEQUENCE [LARGE SCALE MRNA] OF 68-636</scope>
    <source>
        <strain>C57BL/6J</strain>
        <tissue>Tongue</tissue>
    </source>
</reference>
<reference key="3">
    <citation type="journal article" date="2010" name="Cell">
        <title>A tissue-specific atlas of mouse protein phosphorylation and expression.</title>
        <authorList>
            <person name="Huttlin E.L."/>
            <person name="Jedrychowski M.P."/>
            <person name="Elias J.E."/>
            <person name="Goswami T."/>
            <person name="Rad R."/>
            <person name="Beausoleil S.A."/>
            <person name="Villen J."/>
            <person name="Haas W."/>
            <person name="Sowa M.E."/>
            <person name="Gygi S.P."/>
        </authorList>
    </citation>
    <scope>PHOSPHORYLATION [LARGE SCALE ANALYSIS] AT SER-184; SER-185 AND SER-257</scope>
    <scope>IDENTIFICATION BY MASS SPECTROMETRY [LARGE SCALE ANALYSIS]</scope>
    <source>
        <tissue>Brain</tissue>
        <tissue>Heart</tissue>
        <tissue>Kidney</tissue>
        <tissue>Lung</tissue>
        <tissue>Pancreas</tissue>
        <tissue>Testis</tissue>
    </source>
</reference>